<protein>
    <recommendedName>
        <fullName evidence="1">Glycogen debranching enzyme</fullName>
        <ecNumber evidence="1">3.2.1.196</ecNumber>
    </recommendedName>
    <alternativeName>
        <fullName evidence="1">Limit dextrin alpha-1,6-maltotetraose-hydrolase</fullName>
    </alternativeName>
</protein>
<keyword id="KW-0119">Carbohydrate metabolism</keyword>
<keyword id="KW-0321">Glycogen metabolism</keyword>
<keyword id="KW-0326">Glycosidase</keyword>
<keyword id="KW-0378">Hydrolase</keyword>
<keyword id="KW-1185">Reference proteome</keyword>
<proteinExistence type="inferred from homology"/>
<dbReference type="EC" id="3.2.1.196" evidence="1"/>
<dbReference type="EMBL" id="CU928161">
    <property type="protein sequence ID" value="CAR05041.1"/>
    <property type="molecule type" value="Genomic_DNA"/>
</dbReference>
<dbReference type="RefSeq" id="WP_000192575.1">
    <property type="nucleotide sequence ID" value="NC_011742.1"/>
</dbReference>
<dbReference type="SMR" id="B7MDR6"/>
<dbReference type="CAZy" id="CBM48">
    <property type="family name" value="Carbohydrate-Binding Module Family 48"/>
</dbReference>
<dbReference type="CAZy" id="GH13">
    <property type="family name" value="Glycoside Hydrolase Family 13"/>
</dbReference>
<dbReference type="KEGG" id="ecz:ECS88_3829"/>
<dbReference type="HOGENOM" id="CLU_011725_1_1_6"/>
<dbReference type="UniPathway" id="UPA00165"/>
<dbReference type="Proteomes" id="UP000000747">
    <property type="component" value="Chromosome"/>
</dbReference>
<dbReference type="GO" id="GO:0004133">
    <property type="term" value="F:glycogen debranching enzyme activity"/>
    <property type="evidence" value="ECO:0007669"/>
    <property type="project" value="UniProtKB-UniRule"/>
</dbReference>
<dbReference type="GO" id="GO:0004553">
    <property type="term" value="F:hydrolase activity, hydrolyzing O-glycosyl compounds"/>
    <property type="evidence" value="ECO:0007669"/>
    <property type="project" value="InterPro"/>
</dbReference>
<dbReference type="GO" id="GO:0005980">
    <property type="term" value="P:glycogen catabolic process"/>
    <property type="evidence" value="ECO:0007669"/>
    <property type="project" value="UniProtKB-UniRule"/>
</dbReference>
<dbReference type="CDD" id="cd11326">
    <property type="entry name" value="AmyAc_Glg_debranch"/>
    <property type="match status" value="1"/>
</dbReference>
<dbReference type="CDD" id="cd02856">
    <property type="entry name" value="E_set_GDE_Isoamylase_N"/>
    <property type="match status" value="1"/>
</dbReference>
<dbReference type="FunFam" id="2.60.40.10:FF:000468">
    <property type="entry name" value="Glycogen debranching enzyme"/>
    <property type="match status" value="1"/>
</dbReference>
<dbReference type="FunFam" id="3.20.20.80:FF:000031">
    <property type="entry name" value="Glycogen debranching enzyme"/>
    <property type="match status" value="1"/>
</dbReference>
<dbReference type="Gene3D" id="3.20.20.80">
    <property type="entry name" value="Glycosidases"/>
    <property type="match status" value="1"/>
</dbReference>
<dbReference type="Gene3D" id="2.60.40.1180">
    <property type="entry name" value="Golgi alpha-mannosidase II"/>
    <property type="match status" value="1"/>
</dbReference>
<dbReference type="Gene3D" id="2.60.40.10">
    <property type="entry name" value="Immunoglobulins"/>
    <property type="match status" value="1"/>
</dbReference>
<dbReference type="HAMAP" id="MF_01248">
    <property type="entry name" value="GlgX"/>
    <property type="match status" value="1"/>
</dbReference>
<dbReference type="InterPro" id="IPR040784">
    <property type="entry name" value="GlgX_C"/>
</dbReference>
<dbReference type="InterPro" id="IPR044505">
    <property type="entry name" value="GlgX_Isoamylase_N_E_set"/>
</dbReference>
<dbReference type="InterPro" id="IPR006047">
    <property type="entry name" value="Glyco_hydro_13_cat_dom"/>
</dbReference>
<dbReference type="InterPro" id="IPR004193">
    <property type="entry name" value="Glyco_hydro_13_N"/>
</dbReference>
<dbReference type="InterPro" id="IPR013780">
    <property type="entry name" value="Glyco_hydro_b"/>
</dbReference>
<dbReference type="InterPro" id="IPR022844">
    <property type="entry name" value="Glycogen_debranch_bac"/>
</dbReference>
<dbReference type="InterPro" id="IPR011837">
    <property type="entry name" value="Glycogen_debranch_GlgX"/>
</dbReference>
<dbReference type="InterPro" id="IPR017853">
    <property type="entry name" value="Glycoside_hydrolase_SF"/>
</dbReference>
<dbReference type="InterPro" id="IPR013783">
    <property type="entry name" value="Ig-like_fold"/>
</dbReference>
<dbReference type="InterPro" id="IPR014756">
    <property type="entry name" value="Ig_E-set"/>
</dbReference>
<dbReference type="NCBIfam" id="TIGR02100">
    <property type="entry name" value="glgX_debranch"/>
    <property type="match status" value="1"/>
</dbReference>
<dbReference type="NCBIfam" id="NF002983">
    <property type="entry name" value="PRK03705.1"/>
    <property type="match status" value="1"/>
</dbReference>
<dbReference type="PANTHER" id="PTHR43002">
    <property type="entry name" value="GLYCOGEN DEBRANCHING ENZYME"/>
    <property type="match status" value="1"/>
</dbReference>
<dbReference type="Pfam" id="PF00128">
    <property type="entry name" value="Alpha-amylase"/>
    <property type="match status" value="1"/>
</dbReference>
<dbReference type="Pfam" id="PF02922">
    <property type="entry name" value="CBM_48"/>
    <property type="match status" value="1"/>
</dbReference>
<dbReference type="Pfam" id="PF18390">
    <property type="entry name" value="GlgX_C"/>
    <property type="match status" value="1"/>
</dbReference>
<dbReference type="SMART" id="SM00642">
    <property type="entry name" value="Aamy"/>
    <property type="match status" value="1"/>
</dbReference>
<dbReference type="SUPFAM" id="SSF51445">
    <property type="entry name" value="(Trans)glycosidases"/>
    <property type="match status" value="1"/>
</dbReference>
<dbReference type="SUPFAM" id="SSF81296">
    <property type="entry name" value="E set domains"/>
    <property type="match status" value="1"/>
</dbReference>
<reference key="1">
    <citation type="journal article" date="2009" name="PLoS Genet.">
        <title>Organised genome dynamics in the Escherichia coli species results in highly diverse adaptive paths.</title>
        <authorList>
            <person name="Touchon M."/>
            <person name="Hoede C."/>
            <person name="Tenaillon O."/>
            <person name="Barbe V."/>
            <person name="Baeriswyl S."/>
            <person name="Bidet P."/>
            <person name="Bingen E."/>
            <person name="Bonacorsi S."/>
            <person name="Bouchier C."/>
            <person name="Bouvet O."/>
            <person name="Calteau A."/>
            <person name="Chiapello H."/>
            <person name="Clermont O."/>
            <person name="Cruveiller S."/>
            <person name="Danchin A."/>
            <person name="Diard M."/>
            <person name="Dossat C."/>
            <person name="Karoui M.E."/>
            <person name="Frapy E."/>
            <person name="Garry L."/>
            <person name="Ghigo J.M."/>
            <person name="Gilles A.M."/>
            <person name="Johnson J."/>
            <person name="Le Bouguenec C."/>
            <person name="Lescat M."/>
            <person name="Mangenot S."/>
            <person name="Martinez-Jehanne V."/>
            <person name="Matic I."/>
            <person name="Nassif X."/>
            <person name="Oztas S."/>
            <person name="Petit M.A."/>
            <person name="Pichon C."/>
            <person name="Rouy Z."/>
            <person name="Ruf C.S."/>
            <person name="Schneider D."/>
            <person name="Tourret J."/>
            <person name="Vacherie B."/>
            <person name="Vallenet D."/>
            <person name="Medigue C."/>
            <person name="Rocha E.P.C."/>
            <person name="Denamur E."/>
        </authorList>
    </citation>
    <scope>NUCLEOTIDE SEQUENCE [LARGE SCALE GENOMIC DNA]</scope>
    <source>
        <strain>S88 / ExPEC</strain>
    </source>
</reference>
<organism>
    <name type="scientific">Escherichia coli O45:K1 (strain S88 / ExPEC)</name>
    <dbReference type="NCBI Taxonomy" id="585035"/>
    <lineage>
        <taxon>Bacteria</taxon>
        <taxon>Pseudomonadati</taxon>
        <taxon>Pseudomonadota</taxon>
        <taxon>Gammaproteobacteria</taxon>
        <taxon>Enterobacterales</taxon>
        <taxon>Enterobacteriaceae</taxon>
        <taxon>Escherichia</taxon>
    </lineage>
</organism>
<comment type="function">
    <text evidence="1">Removes maltotriose and maltotetraose chains that are attached by 1,6-alpha-linkage to the limit dextrin main chain, generating a debranched limit dextrin.</text>
</comment>
<comment type="catalytic activity">
    <reaction evidence="1">
        <text>Hydrolysis of (1-&gt;6)-alpha-D-glucosidic linkages to branches with degrees of polymerization of three or four glucose residues in limit dextrin.</text>
        <dbReference type="EC" id="3.2.1.196"/>
    </reaction>
</comment>
<comment type="pathway">
    <text evidence="1">Glycan degradation; glycogen degradation.</text>
</comment>
<comment type="similarity">
    <text evidence="1">Belongs to the glycosyl hydrolase 13 family.</text>
</comment>
<feature type="chain" id="PRO_1000139863" description="Glycogen debranching enzyme">
    <location>
        <begin position="1"/>
        <end position="657"/>
    </location>
</feature>
<feature type="region of interest" description="Disordered" evidence="2">
    <location>
        <begin position="460"/>
        <end position="479"/>
    </location>
</feature>
<feature type="active site" description="Nucleophile" evidence="1">
    <location>
        <position position="336"/>
    </location>
</feature>
<feature type="active site" description="Proton donor" evidence="1">
    <location>
        <position position="371"/>
    </location>
</feature>
<feature type="site" description="Transition state stabilizer" evidence="1">
    <location>
        <position position="443"/>
    </location>
</feature>
<sequence length="657" mass="73734">MTQLAIGKPTPLGAHYDGQGVNFTLFSAHAERVELCVFDANGQEHRYDLPGHSGDIWHGYLPDARPGLRYGYRVHGPWQPAEGHRFNPAKLLIDPCARQIDGEFKDNPLLHAGHNEPDYRDNASIAPKCVVVVDHYDWEDDAPPRMPWGCTIIYEAHVKGLTYLHPEIPVEIRGTYKALGHPVMINYLKQLGITALELLPVAQFASEPRLQRMGLSNYWGYNPVAMFALHPAYACSPETALDEFRDAIKALHKAGIEVILDIVLNHSAELDLDGPLFSLRGIDNRSYYWIREDGDYHNWTGCGNTLNLSHPAVVDYASACLRYWVETCHVDGFRFDLAAVMGRTPEFRQDAPLFTAIQNCPVLSQVKLIAEPWDIAPGGYQVGNFPPLFAEWNDHFRDAARRFWLHYDLPLGAFAGRFAASSDVFKRNGRLPSAAINLVTAHDGFTLRDCVCFNHKHNEANGEENRDGTNNNYSNNHGKEGLGGTLDLVERRRDSIHALLTTLLLSQGTPMLLAGDEHGHSQRGNNNAYCQDNQLTWLDWSQASSGLTAFTAALIHLRKRIPALMENRWWEEGDGNVRWLNRYAQPLSTDEWQNGPKQLQILLSDRFLIAINATLEVTEIVLPAGEWHAIPPFAGEDNPVITAVWQGPAHGLCVFQR</sequence>
<name>GLGX_ECO45</name>
<evidence type="ECO:0000255" key="1">
    <source>
        <dbReference type="HAMAP-Rule" id="MF_01248"/>
    </source>
</evidence>
<evidence type="ECO:0000256" key="2">
    <source>
        <dbReference type="SAM" id="MobiDB-lite"/>
    </source>
</evidence>
<accession>B7MDR6</accession>
<gene>
    <name evidence="1" type="primary">glgX</name>
    <name type="ordered locus">ECS88_3829</name>
</gene>